<gene>
    <name evidence="1" type="primary">rplY</name>
    <name evidence="1" type="synonym">ctc</name>
    <name type="ordered locus">XAC0951</name>
</gene>
<evidence type="ECO:0000255" key="1">
    <source>
        <dbReference type="HAMAP-Rule" id="MF_01334"/>
    </source>
</evidence>
<evidence type="ECO:0000305" key="2"/>
<organism>
    <name type="scientific">Xanthomonas axonopodis pv. citri (strain 306)</name>
    <dbReference type="NCBI Taxonomy" id="190486"/>
    <lineage>
        <taxon>Bacteria</taxon>
        <taxon>Pseudomonadati</taxon>
        <taxon>Pseudomonadota</taxon>
        <taxon>Gammaproteobacteria</taxon>
        <taxon>Lysobacterales</taxon>
        <taxon>Lysobacteraceae</taxon>
        <taxon>Xanthomonas</taxon>
    </lineage>
</organism>
<sequence length="211" mass="23351">MAKTHEIKVERRADEGKGASRRLRHAGVIPAIVYGGELEPVSIQLNHEQIWLAQQNEWFYSSILDLNLNGDVQQVLLRDMQRHPFKQLIMHIDFQRVSANEKLSAAVPLHFINEASSPAGKSSEVVVTHELNEVQVVCLPKDLPEFIEVDLGALEVGNVIHLSEIKLPAGVEIPELKLGKEHDVAVVAAKHVRIEEDDAAGEEGSEGAETK</sequence>
<name>RL25_XANAC</name>
<proteinExistence type="inferred from homology"/>
<feature type="chain" id="PRO_0000181618" description="Large ribosomal subunit protein bL25">
    <location>
        <begin position="1"/>
        <end position="211"/>
    </location>
</feature>
<accession>Q8PNT9</accession>
<protein>
    <recommendedName>
        <fullName evidence="1">Large ribosomal subunit protein bL25</fullName>
    </recommendedName>
    <alternativeName>
        <fullName evidence="2">50S ribosomal protein L25</fullName>
    </alternativeName>
    <alternativeName>
        <fullName evidence="1">General stress protein CTC</fullName>
    </alternativeName>
</protein>
<reference key="1">
    <citation type="journal article" date="2002" name="Nature">
        <title>Comparison of the genomes of two Xanthomonas pathogens with differing host specificities.</title>
        <authorList>
            <person name="da Silva A.C.R."/>
            <person name="Ferro J.A."/>
            <person name="Reinach F.C."/>
            <person name="Farah C.S."/>
            <person name="Furlan L.R."/>
            <person name="Quaggio R.B."/>
            <person name="Monteiro-Vitorello C.B."/>
            <person name="Van Sluys M.A."/>
            <person name="Almeida N.F. Jr."/>
            <person name="Alves L.M.C."/>
            <person name="do Amaral A.M."/>
            <person name="Bertolini M.C."/>
            <person name="Camargo L.E.A."/>
            <person name="Camarotte G."/>
            <person name="Cannavan F."/>
            <person name="Cardozo J."/>
            <person name="Chambergo F."/>
            <person name="Ciapina L.P."/>
            <person name="Cicarelli R.M.B."/>
            <person name="Coutinho L.L."/>
            <person name="Cursino-Santos J.R."/>
            <person name="El-Dorry H."/>
            <person name="Faria J.B."/>
            <person name="Ferreira A.J.S."/>
            <person name="Ferreira R.C.C."/>
            <person name="Ferro M.I.T."/>
            <person name="Formighieri E.F."/>
            <person name="Franco M.C."/>
            <person name="Greggio C.C."/>
            <person name="Gruber A."/>
            <person name="Katsuyama A.M."/>
            <person name="Kishi L.T."/>
            <person name="Leite R.P."/>
            <person name="Lemos E.G.M."/>
            <person name="Lemos M.V.F."/>
            <person name="Locali E.C."/>
            <person name="Machado M.A."/>
            <person name="Madeira A.M.B.N."/>
            <person name="Martinez-Rossi N.M."/>
            <person name="Martins E.C."/>
            <person name="Meidanis J."/>
            <person name="Menck C.F.M."/>
            <person name="Miyaki C.Y."/>
            <person name="Moon D.H."/>
            <person name="Moreira L.M."/>
            <person name="Novo M.T.M."/>
            <person name="Okura V.K."/>
            <person name="Oliveira M.C."/>
            <person name="Oliveira V.R."/>
            <person name="Pereira H.A."/>
            <person name="Rossi A."/>
            <person name="Sena J.A.D."/>
            <person name="Silva C."/>
            <person name="de Souza R.F."/>
            <person name="Spinola L.A.F."/>
            <person name="Takita M.A."/>
            <person name="Tamura R.E."/>
            <person name="Teixeira E.C."/>
            <person name="Tezza R.I.D."/>
            <person name="Trindade dos Santos M."/>
            <person name="Truffi D."/>
            <person name="Tsai S.M."/>
            <person name="White F.F."/>
            <person name="Setubal J.C."/>
            <person name="Kitajima J.P."/>
        </authorList>
    </citation>
    <scope>NUCLEOTIDE SEQUENCE [LARGE SCALE GENOMIC DNA]</scope>
    <source>
        <strain>306</strain>
    </source>
</reference>
<keyword id="KW-0687">Ribonucleoprotein</keyword>
<keyword id="KW-0689">Ribosomal protein</keyword>
<keyword id="KW-0694">RNA-binding</keyword>
<keyword id="KW-0699">rRNA-binding</keyword>
<comment type="function">
    <text evidence="1">This is one of the proteins that binds to the 5S RNA in the ribosome where it forms part of the central protuberance.</text>
</comment>
<comment type="subunit">
    <text evidence="1">Part of the 50S ribosomal subunit; part of the 5S rRNA/L5/L18/L25 subcomplex. Contacts the 5S rRNA. Binds to the 5S rRNA independently of L5 and L18.</text>
</comment>
<comment type="similarity">
    <text evidence="1">Belongs to the bacterial ribosomal protein bL25 family. CTC subfamily.</text>
</comment>
<dbReference type="EMBL" id="AE008923">
    <property type="protein sequence ID" value="AAM35838.1"/>
    <property type="molecule type" value="Genomic_DNA"/>
</dbReference>
<dbReference type="RefSeq" id="WP_003486759.1">
    <property type="nucleotide sequence ID" value="NC_003919.1"/>
</dbReference>
<dbReference type="SMR" id="Q8PNT9"/>
<dbReference type="KEGG" id="xac:XAC0951"/>
<dbReference type="eggNOG" id="COG1825">
    <property type="taxonomic scope" value="Bacteria"/>
</dbReference>
<dbReference type="HOGENOM" id="CLU_075939_0_1_6"/>
<dbReference type="Proteomes" id="UP000000576">
    <property type="component" value="Chromosome"/>
</dbReference>
<dbReference type="GO" id="GO:0022625">
    <property type="term" value="C:cytosolic large ribosomal subunit"/>
    <property type="evidence" value="ECO:0007669"/>
    <property type="project" value="TreeGrafter"/>
</dbReference>
<dbReference type="GO" id="GO:0008097">
    <property type="term" value="F:5S rRNA binding"/>
    <property type="evidence" value="ECO:0007669"/>
    <property type="project" value="InterPro"/>
</dbReference>
<dbReference type="GO" id="GO:0003735">
    <property type="term" value="F:structural constituent of ribosome"/>
    <property type="evidence" value="ECO:0007669"/>
    <property type="project" value="InterPro"/>
</dbReference>
<dbReference type="GO" id="GO:0006412">
    <property type="term" value="P:translation"/>
    <property type="evidence" value="ECO:0007669"/>
    <property type="project" value="UniProtKB-UniRule"/>
</dbReference>
<dbReference type="CDD" id="cd00495">
    <property type="entry name" value="Ribosomal_L25_TL5_CTC"/>
    <property type="match status" value="1"/>
</dbReference>
<dbReference type="FunFam" id="2.40.240.10:FF:000002">
    <property type="entry name" value="50S ribosomal protein L25"/>
    <property type="match status" value="1"/>
</dbReference>
<dbReference type="Gene3D" id="2.170.120.20">
    <property type="entry name" value="Ribosomal protein L25, beta domain"/>
    <property type="match status" value="1"/>
</dbReference>
<dbReference type="Gene3D" id="2.40.240.10">
    <property type="entry name" value="Ribosomal Protein L25, Chain P"/>
    <property type="match status" value="1"/>
</dbReference>
<dbReference type="HAMAP" id="MF_01336">
    <property type="entry name" value="Ribosomal_bL25"/>
    <property type="match status" value="1"/>
</dbReference>
<dbReference type="HAMAP" id="MF_01334">
    <property type="entry name" value="Ribosomal_bL25_CTC"/>
    <property type="match status" value="1"/>
</dbReference>
<dbReference type="InterPro" id="IPR020056">
    <property type="entry name" value="Rbsml_bL25/Gln-tRNA_synth_N"/>
</dbReference>
<dbReference type="InterPro" id="IPR011035">
    <property type="entry name" value="Ribosomal_bL25/Gln-tRNA_synth"/>
</dbReference>
<dbReference type="InterPro" id="IPR020057">
    <property type="entry name" value="Ribosomal_bL25_b-dom"/>
</dbReference>
<dbReference type="InterPro" id="IPR037121">
    <property type="entry name" value="Ribosomal_bL25_C"/>
</dbReference>
<dbReference type="InterPro" id="IPR001021">
    <property type="entry name" value="Ribosomal_bL25_long"/>
</dbReference>
<dbReference type="InterPro" id="IPR020055">
    <property type="entry name" value="Ribosomal_bL25_short"/>
</dbReference>
<dbReference type="InterPro" id="IPR029751">
    <property type="entry name" value="Ribosomal_L25_dom"/>
</dbReference>
<dbReference type="InterPro" id="IPR020930">
    <property type="entry name" value="Ribosomal_uL5_bac-type"/>
</dbReference>
<dbReference type="NCBIfam" id="TIGR00731">
    <property type="entry name" value="bL25_bact_ctc"/>
    <property type="match status" value="1"/>
</dbReference>
<dbReference type="NCBIfam" id="NF004128">
    <property type="entry name" value="PRK05618.1-2"/>
    <property type="match status" value="1"/>
</dbReference>
<dbReference type="NCBIfam" id="NF004130">
    <property type="entry name" value="PRK05618.1-5"/>
    <property type="match status" value="1"/>
</dbReference>
<dbReference type="NCBIfam" id="NF004612">
    <property type="entry name" value="PRK05943.1"/>
    <property type="match status" value="1"/>
</dbReference>
<dbReference type="PANTHER" id="PTHR33284">
    <property type="entry name" value="RIBOSOMAL PROTEIN L25/GLN-TRNA SYNTHETASE, ANTI-CODON-BINDING DOMAIN-CONTAINING PROTEIN"/>
    <property type="match status" value="1"/>
</dbReference>
<dbReference type="PANTHER" id="PTHR33284:SF1">
    <property type="entry name" value="RIBOSOMAL PROTEIN L25_GLN-TRNA SYNTHETASE, ANTI-CODON-BINDING DOMAIN-CONTAINING PROTEIN"/>
    <property type="match status" value="1"/>
</dbReference>
<dbReference type="Pfam" id="PF01386">
    <property type="entry name" value="Ribosomal_L25p"/>
    <property type="match status" value="1"/>
</dbReference>
<dbReference type="Pfam" id="PF14693">
    <property type="entry name" value="Ribosomal_TL5_C"/>
    <property type="match status" value="1"/>
</dbReference>
<dbReference type="SUPFAM" id="SSF50715">
    <property type="entry name" value="Ribosomal protein L25-like"/>
    <property type="match status" value="1"/>
</dbReference>